<feature type="chain" id="PRO_1000166710" description="Large ribosomal subunit protein bL21">
    <location>
        <begin position="1"/>
        <end position="103"/>
    </location>
</feature>
<keyword id="KW-0687">Ribonucleoprotein</keyword>
<keyword id="KW-0689">Ribosomal protein</keyword>
<keyword id="KW-0694">RNA-binding</keyword>
<keyword id="KW-0699">rRNA-binding</keyword>
<sequence length="103" mass="11752">MYAIIRDRGMQYRVEPGQVLTIDLLKAEPGSQIELGEVLLVGNGEQVKIGSPLVEGAVVRAEVLGEKKGEKIVVFRYRNKTRYRRRTGHRQRYTQIRISEIVA</sequence>
<name>RL21_CHLAD</name>
<reference key="1">
    <citation type="submission" date="2008-12" db="EMBL/GenBank/DDBJ databases">
        <title>Complete sequence of Chloroflexus aggregans DSM 9485.</title>
        <authorList>
            <consortium name="US DOE Joint Genome Institute"/>
            <person name="Lucas S."/>
            <person name="Copeland A."/>
            <person name="Lapidus A."/>
            <person name="Glavina del Rio T."/>
            <person name="Dalin E."/>
            <person name="Tice H."/>
            <person name="Pitluck S."/>
            <person name="Foster B."/>
            <person name="Larimer F."/>
            <person name="Land M."/>
            <person name="Hauser L."/>
            <person name="Kyrpides N."/>
            <person name="Mikhailova N."/>
            <person name="Bryant D.A."/>
            <person name="Richardson P."/>
        </authorList>
    </citation>
    <scope>NUCLEOTIDE SEQUENCE [LARGE SCALE GENOMIC DNA]</scope>
    <source>
        <strain>MD-66 / DSM 9485</strain>
    </source>
</reference>
<protein>
    <recommendedName>
        <fullName evidence="1">Large ribosomal subunit protein bL21</fullName>
    </recommendedName>
    <alternativeName>
        <fullName evidence="2">50S ribosomal protein L21</fullName>
    </alternativeName>
</protein>
<organism>
    <name type="scientific">Chloroflexus aggregans (strain MD-66 / DSM 9485)</name>
    <dbReference type="NCBI Taxonomy" id="326427"/>
    <lineage>
        <taxon>Bacteria</taxon>
        <taxon>Bacillati</taxon>
        <taxon>Chloroflexota</taxon>
        <taxon>Chloroflexia</taxon>
        <taxon>Chloroflexales</taxon>
        <taxon>Chloroflexineae</taxon>
        <taxon>Chloroflexaceae</taxon>
        <taxon>Chloroflexus</taxon>
    </lineage>
</organism>
<comment type="function">
    <text evidence="1">This protein binds to 23S rRNA in the presence of protein L20.</text>
</comment>
<comment type="subunit">
    <text evidence="1">Part of the 50S ribosomal subunit. Contacts protein L20.</text>
</comment>
<comment type="similarity">
    <text evidence="1">Belongs to the bacterial ribosomal protein bL21 family.</text>
</comment>
<evidence type="ECO:0000255" key="1">
    <source>
        <dbReference type="HAMAP-Rule" id="MF_01363"/>
    </source>
</evidence>
<evidence type="ECO:0000305" key="2"/>
<proteinExistence type="inferred from homology"/>
<dbReference type="EMBL" id="CP001337">
    <property type="protein sequence ID" value="ACL25930.1"/>
    <property type="molecule type" value="Genomic_DNA"/>
</dbReference>
<dbReference type="RefSeq" id="WP_015941782.1">
    <property type="nucleotide sequence ID" value="NC_011831.1"/>
</dbReference>
<dbReference type="SMR" id="B8G6X1"/>
<dbReference type="STRING" id="326427.Cagg_3072"/>
<dbReference type="KEGG" id="cag:Cagg_3072"/>
<dbReference type="eggNOG" id="COG0261">
    <property type="taxonomic scope" value="Bacteria"/>
</dbReference>
<dbReference type="HOGENOM" id="CLU_061463_3_2_0"/>
<dbReference type="OrthoDB" id="9813334at2"/>
<dbReference type="Proteomes" id="UP000002508">
    <property type="component" value="Chromosome"/>
</dbReference>
<dbReference type="GO" id="GO:0005737">
    <property type="term" value="C:cytoplasm"/>
    <property type="evidence" value="ECO:0007669"/>
    <property type="project" value="UniProtKB-ARBA"/>
</dbReference>
<dbReference type="GO" id="GO:1990904">
    <property type="term" value="C:ribonucleoprotein complex"/>
    <property type="evidence" value="ECO:0007669"/>
    <property type="project" value="UniProtKB-KW"/>
</dbReference>
<dbReference type="GO" id="GO:0005840">
    <property type="term" value="C:ribosome"/>
    <property type="evidence" value="ECO:0007669"/>
    <property type="project" value="UniProtKB-KW"/>
</dbReference>
<dbReference type="GO" id="GO:0019843">
    <property type="term" value="F:rRNA binding"/>
    <property type="evidence" value="ECO:0007669"/>
    <property type="project" value="UniProtKB-UniRule"/>
</dbReference>
<dbReference type="GO" id="GO:0003735">
    <property type="term" value="F:structural constituent of ribosome"/>
    <property type="evidence" value="ECO:0007669"/>
    <property type="project" value="InterPro"/>
</dbReference>
<dbReference type="GO" id="GO:0006412">
    <property type="term" value="P:translation"/>
    <property type="evidence" value="ECO:0007669"/>
    <property type="project" value="UniProtKB-UniRule"/>
</dbReference>
<dbReference type="HAMAP" id="MF_01363">
    <property type="entry name" value="Ribosomal_bL21"/>
    <property type="match status" value="1"/>
</dbReference>
<dbReference type="InterPro" id="IPR028909">
    <property type="entry name" value="bL21-like"/>
</dbReference>
<dbReference type="InterPro" id="IPR036164">
    <property type="entry name" value="bL21-like_sf"/>
</dbReference>
<dbReference type="InterPro" id="IPR001787">
    <property type="entry name" value="Ribosomal_bL21"/>
</dbReference>
<dbReference type="InterPro" id="IPR018258">
    <property type="entry name" value="Ribosomal_bL21_CS"/>
</dbReference>
<dbReference type="NCBIfam" id="TIGR00061">
    <property type="entry name" value="L21"/>
    <property type="match status" value="1"/>
</dbReference>
<dbReference type="PANTHER" id="PTHR21349">
    <property type="entry name" value="50S RIBOSOMAL PROTEIN L21"/>
    <property type="match status" value="1"/>
</dbReference>
<dbReference type="PANTHER" id="PTHR21349:SF0">
    <property type="entry name" value="LARGE RIBOSOMAL SUBUNIT PROTEIN BL21M"/>
    <property type="match status" value="1"/>
</dbReference>
<dbReference type="Pfam" id="PF00829">
    <property type="entry name" value="Ribosomal_L21p"/>
    <property type="match status" value="1"/>
</dbReference>
<dbReference type="SUPFAM" id="SSF141091">
    <property type="entry name" value="L21p-like"/>
    <property type="match status" value="1"/>
</dbReference>
<dbReference type="PROSITE" id="PS01169">
    <property type="entry name" value="RIBOSOMAL_L21"/>
    <property type="match status" value="1"/>
</dbReference>
<gene>
    <name evidence="1" type="primary">rplU</name>
    <name type="ordered locus">Cagg_3072</name>
</gene>
<accession>B8G6X1</accession>